<evidence type="ECO:0000250" key="1"/>
<evidence type="ECO:0000305" key="2"/>
<proteinExistence type="inferred from homology"/>
<organism>
    <name type="scientific">Citrifermentans bemidjiense (strain ATCC BAA-1014 / DSM 16622 / JCM 12645 / Bem)</name>
    <name type="common">Geobacter bemidjiensis</name>
    <dbReference type="NCBI Taxonomy" id="404380"/>
    <lineage>
        <taxon>Bacteria</taxon>
        <taxon>Pseudomonadati</taxon>
        <taxon>Thermodesulfobacteriota</taxon>
        <taxon>Desulfuromonadia</taxon>
        <taxon>Geobacterales</taxon>
        <taxon>Geobacteraceae</taxon>
        <taxon>Citrifermentans</taxon>
    </lineage>
</organism>
<dbReference type="EC" id="7.1.1.-"/>
<dbReference type="EMBL" id="CP001124">
    <property type="protein sequence ID" value="ACH37209.1"/>
    <property type="molecule type" value="Genomic_DNA"/>
</dbReference>
<dbReference type="RefSeq" id="WP_012528617.1">
    <property type="nucleotide sequence ID" value="NC_011146.1"/>
</dbReference>
<dbReference type="SMR" id="B5E972"/>
<dbReference type="STRING" id="404380.Gbem_0178"/>
<dbReference type="KEGG" id="gbm:Gbem_0178"/>
<dbReference type="eggNOG" id="COG0377">
    <property type="taxonomic scope" value="Bacteria"/>
</dbReference>
<dbReference type="eggNOG" id="COG0649">
    <property type="taxonomic scope" value="Bacteria"/>
</dbReference>
<dbReference type="eggNOG" id="COG0852">
    <property type="taxonomic scope" value="Bacteria"/>
</dbReference>
<dbReference type="HOGENOM" id="CLU_015134_5_0_7"/>
<dbReference type="OrthoDB" id="9801496at2"/>
<dbReference type="Proteomes" id="UP000008825">
    <property type="component" value="Chromosome"/>
</dbReference>
<dbReference type="GO" id="GO:0005886">
    <property type="term" value="C:plasma membrane"/>
    <property type="evidence" value="ECO:0007669"/>
    <property type="project" value="UniProtKB-SubCell"/>
</dbReference>
<dbReference type="GO" id="GO:0051539">
    <property type="term" value="F:4 iron, 4 sulfur cluster binding"/>
    <property type="evidence" value="ECO:0007669"/>
    <property type="project" value="InterPro"/>
</dbReference>
<dbReference type="GO" id="GO:0005506">
    <property type="term" value="F:iron ion binding"/>
    <property type="evidence" value="ECO:0007669"/>
    <property type="project" value="UniProtKB-UniRule"/>
</dbReference>
<dbReference type="GO" id="GO:0051287">
    <property type="term" value="F:NAD binding"/>
    <property type="evidence" value="ECO:0007669"/>
    <property type="project" value="InterPro"/>
</dbReference>
<dbReference type="GO" id="GO:0008137">
    <property type="term" value="F:NADH dehydrogenase (ubiquinone) activity"/>
    <property type="evidence" value="ECO:0007669"/>
    <property type="project" value="InterPro"/>
</dbReference>
<dbReference type="GO" id="GO:0050136">
    <property type="term" value="F:NADH:ubiquinone reductase (non-electrogenic) activity"/>
    <property type="evidence" value="ECO:0007669"/>
    <property type="project" value="UniProtKB-UniRule"/>
</dbReference>
<dbReference type="GO" id="GO:0048038">
    <property type="term" value="F:quinone binding"/>
    <property type="evidence" value="ECO:0007669"/>
    <property type="project" value="UniProtKB-KW"/>
</dbReference>
<dbReference type="FunFam" id="3.40.50.12280:FF:000002">
    <property type="entry name" value="NADH-quinone oxidoreductase subunit B"/>
    <property type="match status" value="1"/>
</dbReference>
<dbReference type="Gene3D" id="3.40.50.12280">
    <property type="match status" value="1"/>
</dbReference>
<dbReference type="Gene3D" id="1.10.645.10">
    <property type="entry name" value="Cytochrome-c3 Hydrogenase, chain B"/>
    <property type="match status" value="1"/>
</dbReference>
<dbReference type="Gene3D" id="3.30.460.80">
    <property type="entry name" value="NADH:ubiquinone oxidoreductase, 30kDa subunit"/>
    <property type="match status" value="1"/>
</dbReference>
<dbReference type="HAMAP" id="MF_01356">
    <property type="entry name" value="NDH1_NuoB"/>
    <property type="match status" value="1"/>
</dbReference>
<dbReference type="HAMAP" id="MF_01357">
    <property type="entry name" value="NDH1_NuoC"/>
    <property type="match status" value="1"/>
</dbReference>
<dbReference type="HAMAP" id="MF_01358">
    <property type="entry name" value="NDH1_NuoD"/>
    <property type="match status" value="1"/>
</dbReference>
<dbReference type="InterPro" id="IPR010218">
    <property type="entry name" value="NADH_DH_suC"/>
</dbReference>
<dbReference type="InterPro" id="IPR001135">
    <property type="entry name" value="NADH_Q_OxRdtase_suD"/>
</dbReference>
<dbReference type="InterPro" id="IPR037232">
    <property type="entry name" value="NADH_quin_OxRdtase_su_C/D-like"/>
</dbReference>
<dbReference type="InterPro" id="IPR006137">
    <property type="entry name" value="NADH_UbQ_OxRdtase-like_20kDa"/>
</dbReference>
<dbReference type="InterPro" id="IPR001268">
    <property type="entry name" value="NADH_UbQ_OxRdtase_30kDa_su"/>
</dbReference>
<dbReference type="InterPro" id="IPR014029">
    <property type="entry name" value="NADH_UbQ_OxRdtase_49kDa_CS"/>
</dbReference>
<dbReference type="InterPro" id="IPR020396">
    <property type="entry name" value="NADH_UbQ_OxRdtase_CS"/>
</dbReference>
<dbReference type="InterPro" id="IPR006138">
    <property type="entry name" value="NADH_UQ_OxRdtase_20Kd_su"/>
</dbReference>
<dbReference type="InterPro" id="IPR022885">
    <property type="entry name" value="NDH1_su_D/H"/>
</dbReference>
<dbReference type="InterPro" id="IPR029014">
    <property type="entry name" value="NiFe-Hase_large"/>
</dbReference>
<dbReference type="NCBIfam" id="TIGR01957">
    <property type="entry name" value="nuoB_fam"/>
    <property type="match status" value="1"/>
</dbReference>
<dbReference type="NCBIfam" id="TIGR01962">
    <property type="entry name" value="NuoD"/>
    <property type="match status" value="1"/>
</dbReference>
<dbReference type="NCBIfam" id="NF004739">
    <property type="entry name" value="PRK06075.1"/>
    <property type="match status" value="1"/>
</dbReference>
<dbReference type="NCBIfam" id="NF005012">
    <property type="entry name" value="PRK06411.1"/>
    <property type="match status" value="1"/>
</dbReference>
<dbReference type="NCBIfam" id="NF009808">
    <property type="entry name" value="PRK13292.1"/>
    <property type="match status" value="1"/>
</dbReference>
<dbReference type="PANTHER" id="PTHR11993:SF45">
    <property type="entry name" value="NADH-QUINONE OXIDOREDUCTASE SUBUNIT C_D"/>
    <property type="match status" value="1"/>
</dbReference>
<dbReference type="PANTHER" id="PTHR11993">
    <property type="entry name" value="NADH-UBIQUINONE OXIDOREDUCTASE 49 KDA SUBUNIT"/>
    <property type="match status" value="1"/>
</dbReference>
<dbReference type="Pfam" id="PF00329">
    <property type="entry name" value="Complex1_30kDa"/>
    <property type="match status" value="1"/>
</dbReference>
<dbReference type="Pfam" id="PF00346">
    <property type="entry name" value="Complex1_49kDa"/>
    <property type="match status" value="1"/>
</dbReference>
<dbReference type="Pfam" id="PF01058">
    <property type="entry name" value="Oxidored_q6"/>
    <property type="match status" value="1"/>
</dbReference>
<dbReference type="SUPFAM" id="SSF56770">
    <property type="entry name" value="HydA/Nqo6-like"/>
    <property type="match status" value="1"/>
</dbReference>
<dbReference type="SUPFAM" id="SSF56762">
    <property type="entry name" value="HydB/Nqo4-like"/>
    <property type="match status" value="1"/>
</dbReference>
<dbReference type="SUPFAM" id="SSF143243">
    <property type="entry name" value="Nqo5-like"/>
    <property type="match status" value="1"/>
</dbReference>
<dbReference type="PROSITE" id="PS00542">
    <property type="entry name" value="COMPLEX1_30K"/>
    <property type="match status" value="1"/>
</dbReference>
<dbReference type="PROSITE" id="PS00535">
    <property type="entry name" value="COMPLEX1_49K"/>
    <property type="match status" value="1"/>
</dbReference>
<gene>
    <name type="primary">nuoBCD</name>
    <name type="synonym">nuoB</name>
    <name type="synonym">nuoC</name>
    <name type="synonym">nuoD</name>
    <name type="ordered locus">Gbem_0178</name>
</gene>
<protein>
    <recommendedName>
        <fullName>NADH-quinone oxidoreductase subunit B/C/D</fullName>
        <ecNumber>7.1.1.-</ecNumber>
    </recommendedName>
    <alternativeName>
        <fullName>NADH dehydrogenase I subunit B/C/D</fullName>
    </alternativeName>
    <alternativeName>
        <fullName>NDH-1 subunit B/C/D</fullName>
    </alternativeName>
</protein>
<name>NUBCD_CITBB</name>
<keyword id="KW-0997">Cell inner membrane</keyword>
<keyword id="KW-1003">Cell membrane</keyword>
<keyword id="KW-0472">Membrane</keyword>
<keyword id="KW-0511">Multifunctional enzyme</keyword>
<keyword id="KW-0520">NAD</keyword>
<keyword id="KW-0874">Quinone</keyword>
<keyword id="KW-1185">Reference proteome</keyword>
<keyword id="KW-1278">Translocase</keyword>
<keyword id="KW-0813">Transport</keyword>
<keyword id="KW-0830">Ubiquinone</keyword>
<accession>B5E972</accession>
<comment type="function">
    <text evidence="1">NDH-1 shuttles electrons from NADH, via FMN and iron-sulfur (Fe-S) centers, to quinones in the respiratory chain. The immediate electron acceptor for the enzyme in this species is believed to be ubiquinone. Couples the redox reaction to proton translocation (for every two electrons transferred, four hydrogen ions are translocated across the cytoplasmic membrane), and thus conserves the redox energy in a proton gradient.</text>
</comment>
<comment type="catalytic activity">
    <reaction>
        <text>a quinone + NADH + 5 H(+)(in) = a quinol + NAD(+) + 4 H(+)(out)</text>
        <dbReference type="Rhea" id="RHEA:57888"/>
        <dbReference type="ChEBI" id="CHEBI:15378"/>
        <dbReference type="ChEBI" id="CHEBI:24646"/>
        <dbReference type="ChEBI" id="CHEBI:57540"/>
        <dbReference type="ChEBI" id="CHEBI:57945"/>
        <dbReference type="ChEBI" id="CHEBI:132124"/>
    </reaction>
</comment>
<comment type="subunit">
    <text evidence="1">NDH-1 is composed of about 13 different subunits. Subunits NuoBCD, E, F, and G constitute the peripheral sector of the complex (By similarity).</text>
</comment>
<comment type="subcellular location">
    <subcellularLocation>
        <location evidence="1">Cell inner membrane</location>
        <topology evidence="1">Peripheral membrane protein</topology>
        <orientation evidence="1">Cytoplasmic side</orientation>
    </subcellularLocation>
</comment>
<comment type="similarity">
    <text evidence="2">In the N-terminal section; belongs to the complex I 20 kDa subunit family.</text>
</comment>
<comment type="similarity">
    <text evidence="2">In the central section; belongs to the complex I 30 kDa subunit family.</text>
</comment>
<comment type="similarity">
    <text evidence="2">In the C-terminal section; belongs to the complex I 49 kDa subunit family.</text>
</comment>
<reference key="1">
    <citation type="submission" date="2008-07" db="EMBL/GenBank/DDBJ databases">
        <title>Complete sequence of Geobacter bemidjiensis BEM.</title>
        <authorList>
            <consortium name="US DOE Joint Genome Institute"/>
            <person name="Lucas S."/>
            <person name="Copeland A."/>
            <person name="Lapidus A."/>
            <person name="Glavina del Rio T."/>
            <person name="Dalin E."/>
            <person name="Tice H."/>
            <person name="Bruce D."/>
            <person name="Goodwin L."/>
            <person name="Pitluck S."/>
            <person name="Kiss H."/>
            <person name="Brettin T."/>
            <person name="Detter J.C."/>
            <person name="Han C."/>
            <person name="Kuske C.R."/>
            <person name="Schmutz J."/>
            <person name="Larimer F."/>
            <person name="Land M."/>
            <person name="Hauser L."/>
            <person name="Kyrpides N."/>
            <person name="Lykidis A."/>
            <person name="Lovley D."/>
            <person name="Richardson P."/>
        </authorList>
    </citation>
    <scope>NUCLEOTIDE SEQUENCE [LARGE SCALE GENOMIC DNA]</scope>
    <source>
        <strain>ATCC BAA-1014 / DSM 16622 / JCM 12645 / Bem</strain>
    </source>
</reference>
<feature type="chain" id="PRO_0000358642" description="NADH-quinone oxidoreductase subunit B/C/D">
    <location>
        <begin position="1"/>
        <end position="794"/>
    </location>
</feature>
<feature type="region of interest" description="NADH dehydrogenase I subunit B" evidence="1">
    <location>
        <begin position="1"/>
        <end position="158"/>
    </location>
</feature>
<feature type="region of interest" description="NADH dehydrogenase I subunit C" evidence="1">
    <location>
        <begin position="232"/>
        <end position="387"/>
    </location>
</feature>
<feature type="region of interest" description="NADH dehydrogenase I subunit D" evidence="1">
    <location>
        <begin position="414"/>
        <end position="794"/>
    </location>
</feature>
<sequence length="794" mass="89984">MSQGDDDKIPENVLLASLDDMINWGRANSLWPMFFGLSCCFVEMMTSFTSRYDVSRFGAEVLRGTPRESDLMVIAGTVFKKMAPSILRLYDQMAEPKWVISMGSCANSGGMYDVYSVVQGVNQILPVDLYIPGCPPRPESFLEGLMLLQQKIRSEERPTRPVLRMQGGTQGTVAPILVDGATKSRDTRGPGMEGIAIRGSAMQPPYFAAPRSDELWRPKQPRLPYPDFNLQAELQGAFAGQVVLDETACDMLTYRAPARLVPELLRHLKERKESPFRRLEDIACVDESCRRDREKYKDFTVNYHLTCFDTPGRIRIKTELEGSYPEAPSITSVFPVANWYEREAYDMFGIRFAGHPNLRRILMPPDWDGHPLRKEHPARATELPPYTAEDARRQKALPAGDFFDRVDDETLILNLGPQHPGTHGVIRFVLKLSGEEIVDMDSDIGYHHRAAEKTGERQNWHQYIPYTDRVDYLSGVQNNLAYLNSVETLCGIEIPDRAIYIRVMLCELFRIANHLVWLGTFASDLGAMTPVFYTFTDREKIFDIVEFITGGRMHPAWFRIGGVAEDLPEGWQEKVHSFLEWFPGRLAEYEKLLSGNPIFVARLKGVSAITVDTALEWGITGPNLRACDFAWDLRKKMPYGGYDRFEFEVATAQGGDCYARYQVRMEEMRQSLSIVRQAAAGMPGGRFISPDYRYTLPQKRDALEDIESLIHHFVNSTRGISPPKGECYAPIEGSKGEYGYFAVSDGLHTAYRMRIRTATFPHIQSLPVLSRGWLVSDFLAILGSLDFVLSDLDR</sequence>